<proteinExistence type="inferred from homology"/>
<accession>E7NNK3</accession>
<organism>
    <name type="scientific">Saccharomyces cerevisiae (strain FostersO)</name>
    <name type="common">Baker's yeast</name>
    <dbReference type="NCBI Taxonomy" id="764101"/>
    <lineage>
        <taxon>Eukaryota</taxon>
        <taxon>Fungi</taxon>
        <taxon>Dikarya</taxon>
        <taxon>Ascomycota</taxon>
        <taxon>Saccharomycotina</taxon>
        <taxon>Saccharomycetes</taxon>
        <taxon>Saccharomycetales</taxon>
        <taxon>Saccharomycetaceae</taxon>
        <taxon>Saccharomyces</taxon>
    </lineage>
</organism>
<name>BBP1_YEASO</name>
<protein>
    <recommendedName>
        <fullName>Spindle pole component BBP1</fullName>
    </recommendedName>
    <alternativeName>
        <fullName>BFR1-binding protein 1</fullName>
    </alternativeName>
</protein>
<feature type="chain" id="PRO_0000409182" description="Spindle pole component BBP1">
    <location>
        <begin position="1"/>
        <end position="424"/>
    </location>
</feature>
<feature type="region of interest" description="Disordered" evidence="4">
    <location>
        <begin position="34"/>
        <end position="76"/>
    </location>
</feature>
<feature type="coiled-coil region" evidence="3">
    <location>
        <begin position="229"/>
        <end position="355"/>
    </location>
</feature>
<feature type="compositionally biased region" description="Basic and acidic residues" evidence="4">
    <location>
        <begin position="34"/>
        <end position="48"/>
    </location>
</feature>
<feature type="compositionally biased region" description="Low complexity" evidence="4">
    <location>
        <begin position="64"/>
        <end position="75"/>
    </location>
</feature>
<feature type="modified residue" description="Phosphoserine" evidence="2">
    <location>
        <position position="29"/>
    </location>
</feature>
<feature type="modified residue" description="Phosphoserine" evidence="2">
    <location>
        <position position="73"/>
    </location>
</feature>
<feature type="modified residue" description="Phosphoserine" evidence="2">
    <location>
        <position position="115"/>
    </location>
</feature>
<evidence type="ECO:0000250" key="1"/>
<evidence type="ECO:0000250" key="2">
    <source>
        <dbReference type="UniProtKB" id="Q12365"/>
    </source>
</evidence>
<evidence type="ECO:0000255" key="3"/>
<evidence type="ECO:0000256" key="4">
    <source>
        <dbReference type="SAM" id="MobiDB-lite"/>
    </source>
</evidence>
<evidence type="ECO:0000305" key="5"/>
<keyword id="KW-0175">Coiled coil</keyword>
<keyword id="KW-0963">Cytoplasm</keyword>
<keyword id="KW-0206">Cytoskeleton</keyword>
<keyword id="KW-0597">Phosphoprotein</keyword>
<dbReference type="EMBL" id="AEEZ01000096">
    <property type="protein sequence ID" value="EGA60185.1"/>
    <property type="molecule type" value="Genomic_DNA"/>
</dbReference>
<dbReference type="HOGENOM" id="CLU_711875_0_0_1"/>
<dbReference type="OMA" id="WTMDALF"/>
<dbReference type="OrthoDB" id="14223at4893"/>
<dbReference type="GO" id="GO:0005737">
    <property type="term" value="C:cytoplasm"/>
    <property type="evidence" value="ECO:0007669"/>
    <property type="project" value="UniProtKB-KW"/>
</dbReference>
<dbReference type="GO" id="GO:0005816">
    <property type="term" value="C:spindle pole body"/>
    <property type="evidence" value="ECO:0007669"/>
    <property type="project" value="UniProtKB-SubCell"/>
</dbReference>
<dbReference type="InterPro" id="IPR029330">
    <property type="entry name" value="Bbp1_C"/>
</dbReference>
<dbReference type="InterPro" id="IPR029328">
    <property type="entry name" value="Bbp1_N"/>
</dbReference>
<dbReference type="Pfam" id="PF15272">
    <property type="entry name" value="BBP1_C"/>
    <property type="match status" value="1"/>
</dbReference>
<dbReference type="Pfam" id="PF15271">
    <property type="entry name" value="BBP1_N"/>
    <property type="match status" value="1"/>
</dbReference>
<sequence length="424" mass="50205">MNQEDNTGGGGIFGLFKWTKXALFGTDISPSMKYKDQEERRDRSRYAQDDTNFSMKFGNDSNRRSTNLSRSNSWSGLDSTLHRKYELLPEYNENGFNSIVNGDHHSKERIRSLRSPAPIVPREPLRNEPTDTFGHRLHTKRRTINELSNSQIPFIPPQEDDPLLSKLFNKDGVNEVRRSPYKLSVKDIPGKFPSPLTKRDEIDNYYVRDEDACHKNREYKKAYFDLFAQMDLNSRDLEDLCEDVREQREQFHRNEQTYKQAYEEMRAELVNELKKSKTLFENYYSLGQKYKSLKKXLDQTISHEAELATSRERLYQEEDLKNFEIQTLKQRLSDLELKYTNLQIEKDMQRDNYESEIHDLLLQLSLRNNERKDTSAGSNIFSTGQYDRTPFHNGNNSYDSNSHSWDTDYLKKYRRIHRTLKQKS</sequence>
<comment type="function">
    <text evidence="1">Component of the spindle pole body (SPB) required for insertion of the nascent SPB into the nuclear envelope and for the proper execution of spindle pole body (SPB) duplication. Connects the central plaque of the SPB with the half-bridge. Required for proper localization of CDC5 at the SPB and for proper M-phase progression (By similarity).</text>
</comment>
<comment type="subunit">
    <text evidence="1">Homodimer. Interacts with KAR1, MPS2 and SPC29.</text>
</comment>
<comment type="subcellular location">
    <subcellularLocation>
        <location evidence="1">Cytoplasm</location>
        <location evidence="1">Cytoskeleton</location>
        <location evidence="1">Microtubule organizing center</location>
        <location evidence="1">Spindle pole body</location>
    </subcellularLocation>
    <text evidence="1">Associates with the periphary of the central plaque.</text>
</comment>
<comment type="similarity">
    <text evidence="5">Belongs to the BBP1 family.</text>
</comment>
<gene>
    <name type="primary">BBP1</name>
    <name type="ORF">FOSTERSO_4630</name>
</gene>
<reference key="1">
    <citation type="journal article" date="2011" name="PLoS Genet.">
        <title>Whole-genome comparison reveals novel genetic elements that characterize the genome of industrial strains of Saccharomyces cerevisiae.</title>
        <authorList>
            <person name="Borneman A.R."/>
            <person name="Desany B.A."/>
            <person name="Riches D."/>
            <person name="Affourtit J.P."/>
            <person name="Forgan A.H."/>
            <person name="Pretorius I.S."/>
            <person name="Egholm M."/>
            <person name="Chambers P.J."/>
        </authorList>
    </citation>
    <scope>NUCLEOTIDE SEQUENCE [LARGE SCALE GENOMIC DNA]</scope>
    <source>
        <strain>FostersO</strain>
    </source>
</reference>